<accession>Q39BA7</accession>
<comment type="cofactor">
    <cofactor evidence="1">
        <name>Mg(2+)</name>
        <dbReference type="ChEBI" id="CHEBI:18420"/>
    </cofactor>
</comment>
<comment type="similarity">
    <text evidence="3">Belongs to the FAH family.</text>
</comment>
<comment type="caution">
    <text evidence="4">Was originally thought to be a ureidoglycolate lyase (UGL) but several lines of evidence argue against a physiological role of this gene in ureidoglycolate metabolism: (i) experimentally characterized homologs have an established role in the metabolism of 4-hydroxyphenylacetate; (ii) the gene and its homologs are never observed in purine degradation clusters; (iii) in Burkholderia, genes encoding bona fide ureidoglycolate lyase (allA) are present immediately downstream allantoicase, the gene involved in the formation of ureidoglycolate from allantoate.</text>
</comment>
<evidence type="ECO:0000250" key="1">
    <source>
        <dbReference type="UniProtKB" id="Q6P587"/>
    </source>
</evidence>
<evidence type="ECO:0000303" key="2">
    <source>
    </source>
</evidence>
<evidence type="ECO:0000305" key="3"/>
<evidence type="ECO:0000305" key="4">
    <source>
    </source>
</evidence>
<dbReference type="EC" id="3.-.-.-"/>
<dbReference type="EMBL" id="CP000152">
    <property type="protein sequence ID" value="ABB10254.1"/>
    <property type="molecule type" value="Genomic_DNA"/>
</dbReference>
<dbReference type="RefSeq" id="WP_011353752.1">
    <property type="nucleotide sequence ID" value="NC_007511.1"/>
</dbReference>
<dbReference type="SMR" id="Q39BA7"/>
<dbReference type="GeneID" id="45096525"/>
<dbReference type="KEGG" id="bur:Bcep18194_B0137"/>
<dbReference type="PATRIC" id="fig|482957.22.peg.3706"/>
<dbReference type="HOGENOM" id="CLU_028458_3_4_4"/>
<dbReference type="SABIO-RK" id="Q39BA7"/>
<dbReference type="Proteomes" id="UP000002705">
    <property type="component" value="Chromosome 2"/>
</dbReference>
<dbReference type="GO" id="GO:0016787">
    <property type="term" value="F:hydrolase activity"/>
    <property type="evidence" value="ECO:0007669"/>
    <property type="project" value="UniProtKB-KW"/>
</dbReference>
<dbReference type="GO" id="GO:0046872">
    <property type="term" value="F:metal ion binding"/>
    <property type="evidence" value="ECO:0007669"/>
    <property type="project" value="UniProtKB-KW"/>
</dbReference>
<dbReference type="GO" id="GO:0050385">
    <property type="term" value="F:ureidoglycolate lyase activity"/>
    <property type="evidence" value="ECO:0007669"/>
    <property type="project" value="UniProtKB-EC"/>
</dbReference>
<dbReference type="GO" id="GO:0019628">
    <property type="term" value="P:urate catabolic process"/>
    <property type="evidence" value="ECO:0007669"/>
    <property type="project" value="UniProtKB-UniPathway"/>
</dbReference>
<dbReference type="FunFam" id="3.90.850.10:FF:000002">
    <property type="entry name" value="2-hydroxyhepta-2,4-diene-1,7-dioate isomerase"/>
    <property type="match status" value="1"/>
</dbReference>
<dbReference type="Gene3D" id="3.90.850.10">
    <property type="entry name" value="Fumarylacetoacetase-like, C-terminal domain"/>
    <property type="match status" value="1"/>
</dbReference>
<dbReference type="InterPro" id="IPR051121">
    <property type="entry name" value="FAH"/>
</dbReference>
<dbReference type="InterPro" id="IPR011234">
    <property type="entry name" value="Fumarylacetoacetase-like_C"/>
</dbReference>
<dbReference type="InterPro" id="IPR036663">
    <property type="entry name" value="Fumarylacetoacetase_C_sf"/>
</dbReference>
<dbReference type="PANTHER" id="PTHR42796:SF4">
    <property type="entry name" value="FUMARYLACETOACETATE HYDROLASE DOMAIN-CONTAINING PROTEIN 2A"/>
    <property type="match status" value="1"/>
</dbReference>
<dbReference type="PANTHER" id="PTHR42796">
    <property type="entry name" value="FUMARYLACETOACETATE HYDROLASE DOMAIN-CONTAINING PROTEIN 2A-RELATED"/>
    <property type="match status" value="1"/>
</dbReference>
<dbReference type="Pfam" id="PF01557">
    <property type="entry name" value="FAA_hydrolase"/>
    <property type="match status" value="1"/>
</dbReference>
<dbReference type="SUPFAM" id="SSF56529">
    <property type="entry name" value="FAH"/>
    <property type="match status" value="1"/>
</dbReference>
<keyword id="KW-0903">Direct protein sequencing</keyword>
<keyword id="KW-0378">Hydrolase</keyword>
<keyword id="KW-0460">Magnesium</keyword>
<keyword id="KW-0479">Metal-binding</keyword>
<sequence>MKLLRYGPSGQEKPGILDADGRIRDLSAHVPDLSGDVLSDAGLARLRAIDPATLPLVSGEPRIGACVGHVGKFIGIGLNYADHAAEAGMPVPKEPVVFGKWTSSICGPNDGIDIPKGSVKTDWEVELGVVIGATCKDVDEARALDYVAGYCVVNDVSEREWQIERGGQWDKGKGFDTFGPIGPWLVTRDEVPDPQRLDLWLEIDGHRYQNGNTRTMVFTVAQLIAYLSSCMTLQPGDVITTGTPPGVGMGIKPSPVFLKAGQMVRLGVEGLGEQLQHTRDAR</sequence>
<protein>
    <recommendedName>
        <fullName evidence="3">Putative hydrolase Bcep18194_B0137</fullName>
        <ecNumber>3.-.-.-</ecNumber>
    </recommendedName>
    <alternativeName>
        <fullName evidence="2">UGL</fullName>
    </alternativeName>
</protein>
<reference key="1">
    <citation type="submission" date="2005-10" db="EMBL/GenBank/DDBJ databases">
        <title>Complete sequence of chromosome 2 of Burkholderia sp. 383.</title>
        <authorList>
            <consortium name="US DOE Joint Genome Institute"/>
            <person name="Copeland A."/>
            <person name="Lucas S."/>
            <person name="Lapidus A."/>
            <person name="Barry K."/>
            <person name="Detter J.C."/>
            <person name="Glavina T."/>
            <person name="Hammon N."/>
            <person name="Israni S."/>
            <person name="Pitluck S."/>
            <person name="Chain P."/>
            <person name="Malfatti S."/>
            <person name="Shin M."/>
            <person name="Vergez L."/>
            <person name="Schmutz J."/>
            <person name="Larimer F."/>
            <person name="Land M."/>
            <person name="Kyrpides N."/>
            <person name="Lykidis A."/>
            <person name="Richardson P."/>
        </authorList>
    </citation>
    <scope>NUCLEOTIDE SEQUENCE [LARGE SCALE GENOMIC DNA]</scope>
    <source>
        <strain>ATCC 17760 / DSM 23089 / LMG 22485 / NCIMB 9086 / R18194 / 383</strain>
    </source>
</reference>
<reference key="2">
    <citation type="journal article" date="2003" name="J. Biol. Chem.">
        <title>Catalysis, stereochemistry, and inhibition of ureidoglycolate lyase.</title>
        <authorList>
            <person name="McIninch J.K."/>
            <person name="McIninch J.D."/>
            <person name="May S.W."/>
        </authorList>
    </citation>
    <scope>PROTEIN SEQUENCE OF 1-42; 48-62 AND 197-207</scope>
</reference>
<reference key="3">
    <citation type="journal article" date="2013" name="Database">
        <title>Ureidoglycolate hydrolase, amidohydrolase, lyase: how errors in biological databases are incorporated in scientific papers and vice versa.</title>
        <authorList>
            <person name="Percudani R."/>
            <person name="Carnevali D."/>
            <person name="Puggioni V."/>
        </authorList>
    </citation>
    <scope>CAUTION</scope>
</reference>
<name>UGL_BURL3</name>
<feature type="chain" id="PRO_0000371508" description="Putative hydrolase Bcep18194_B0137">
    <location>
        <begin position="1"/>
        <end position="282"/>
    </location>
</feature>
<feature type="binding site" evidence="1">
    <location>
        <position position="124"/>
    </location>
    <ligand>
        <name>Mg(2+)</name>
        <dbReference type="ChEBI" id="CHEBI:18420"/>
    </ligand>
</feature>
<feature type="binding site" evidence="1">
    <location>
        <position position="126"/>
    </location>
    <ligand>
        <name>Mg(2+)</name>
        <dbReference type="ChEBI" id="CHEBI:18420"/>
    </ligand>
</feature>
<feature type="binding site" evidence="1">
    <location>
        <position position="155"/>
    </location>
    <ligand>
        <name>Mg(2+)</name>
        <dbReference type="ChEBI" id="CHEBI:18420"/>
    </ligand>
</feature>
<proteinExistence type="evidence at protein level"/>
<organism>
    <name type="scientific">Burkholderia lata (strain ATCC 17760 / DSM 23089 / LMG 22485 / NCIMB 9086 / R18194 / 383)</name>
    <dbReference type="NCBI Taxonomy" id="482957"/>
    <lineage>
        <taxon>Bacteria</taxon>
        <taxon>Pseudomonadati</taxon>
        <taxon>Pseudomonadota</taxon>
        <taxon>Betaproteobacteria</taxon>
        <taxon>Burkholderiales</taxon>
        <taxon>Burkholderiaceae</taxon>
        <taxon>Burkholderia</taxon>
        <taxon>Burkholderia cepacia complex</taxon>
    </lineage>
</organism>
<gene>
    <name type="ordered locus">Bcep18194_B0137</name>
</gene>